<reference key="1">
    <citation type="journal article" date="2006" name="J. Bacteriol.">
        <title>Pathogenomic sequence analysis of Bacillus cereus and Bacillus thuringiensis isolates closely related to Bacillus anthracis.</title>
        <authorList>
            <person name="Han C.S."/>
            <person name="Xie G."/>
            <person name="Challacombe J.F."/>
            <person name="Altherr M.R."/>
            <person name="Bhotika S.S."/>
            <person name="Bruce D."/>
            <person name="Campbell C.S."/>
            <person name="Campbell M.L."/>
            <person name="Chen J."/>
            <person name="Chertkov O."/>
            <person name="Cleland C."/>
            <person name="Dimitrijevic M."/>
            <person name="Doggett N.A."/>
            <person name="Fawcett J.J."/>
            <person name="Glavina T."/>
            <person name="Goodwin L.A."/>
            <person name="Hill K.K."/>
            <person name="Hitchcock P."/>
            <person name="Jackson P.J."/>
            <person name="Keim P."/>
            <person name="Kewalramani A.R."/>
            <person name="Longmire J."/>
            <person name="Lucas S."/>
            <person name="Malfatti S."/>
            <person name="McMurry K."/>
            <person name="Meincke L.J."/>
            <person name="Misra M."/>
            <person name="Moseman B.L."/>
            <person name="Mundt M."/>
            <person name="Munk A.C."/>
            <person name="Okinaka R.T."/>
            <person name="Parson-Quintana B."/>
            <person name="Reilly L.P."/>
            <person name="Richardson P."/>
            <person name="Robinson D.L."/>
            <person name="Rubin E."/>
            <person name="Saunders E."/>
            <person name="Tapia R."/>
            <person name="Tesmer J.G."/>
            <person name="Thayer N."/>
            <person name="Thompson L.S."/>
            <person name="Tice H."/>
            <person name="Ticknor L.O."/>
            <person name="Wills P.L."/>
            <person name="Brettin T.S."/>
            <person name="Gilna P."/>
        </authorList>
    </citation>
    <scope>NUCLEOTIDE SEQUENCE [LARGE SCALE GENOMIC DNA]</scope>
    <source>
        <strain>ZK / E33L</strain>
    </source>
</reference>
<feature type="chain" id="PRO_0000176720" description="Small ribosomal subunit protein bS6">
    <location>
        <begin position="1"/>
        <end position="96"/>
    </location>
</feature>
<comment type="function">
    <text evidence="1">Binds together with bS18 to 16S ribosomal RNA.</text>
</comment>
<comment type="similarity">
    <text evidence="1">Belongs to the bacterial ribosomal protein bS6 family.</text>
</comment>
<dbReference type="EMBL" id="CP000001">
    <property type="protein sequence ID" value="AAU20301.1"/>
    <property type="molecule type" value="Genomic_DNA"/>
</dbReference>
<dbReference type="RefSeq" id="WP_001233779.1">
    <property type="nucleotide sequence ID" value="NZ_CP009968.1"/>
</dbReference>
<dbReference type="SMR" id="Q630C8"/>
<dbReference type="GeneID" id="75088663"/>
<dbReference type="KEGG" id="bcz:BCE33L5171"/>
<dbReference type="PATRIC" id="fig|288681.22.peg.170"/>
<dbReference type="Proteomes" id="UP000002612">
    <property type="component" value="Chromosome"/>
</dbReference>
<dbReference type="GO" id="GO:0005737">
    <property type="term" value="C:cytoplasm"/>
    <property type="evidence" value="ECO:0007669"/>
    <property type="project" value="UniProtKB-ARBA"/>
</dbReference>
<dbReference type="GO" id="GO:1990904">
    <property type="term" value="C:ribonucleoprotein complex"/>
    <property type="evidence" value="ECO:0007669"/>
    <property type="project" value="UniProtKB-KW"/>
</dbReference>
<dbReference type="GO" id="GO:0005840">
    <property type="term" value="C:ribosome"/>
    <property type="evidence" value="ECO:0007669"/>
    <property type="project" value="UniProtKB-KW"/>
</dbReference>
<dbReference type="GO" id="GO:0070181">
    <property type="term" value="F:small ribosomal subunit rRNA binding"/>
    <property type="evidence" value="ECO:0007669"/>
    <property type="project" value="TreeGrafter"/>
</dbReference>
<dbReference type="GO" id="GO:0003735">
    <property type="term" value="F:structural constituent of ribosome"/>
    <property type="evidence" value="ECO:0007669"/>
    <property type="project" value="InterPro"/>
</dbReference>
<dbReference type="GO" id="GO:0006412">
    <property type="term" value="P:translation"/>
    <property type="evidence" value="ECO:0007669"/>
    <property type="project" value="UniProtKB-UniRule"/>
</dbReference>
<dbReference type="CDD" id="cd00473">
    <property type="entry name" value="bS6"/>
    <property type="match status" value="1"/>
</dbReference>
<dbReference type="FunFam" id="3.30.70.60:FF:000002">
    <property type="entry name" value="30S ribosomal protein S6"/>
    <property type="match status" value="1"/>
</dbReference>
<dbReference type="Gene3D" id="3.30.70.60">
    <property type="match status" value="1"/>
</dbReference>
<dbReference type="HAMAP" id="MF_00360">
    <property type="entry name" value="Ribosomal_bS6"/>
    <property type="match status" value="1"/>
</dbReference>
<dbReference type="InterPro" id="IPR000529">
    <property type="entry name" value="Ribosomal_bS6"/>
</dbReference>
<dbReference type="InterPro" id="IPR020815">
    <property type="entry name" value="Ribosomal_bS6_CS"/>
</dbReference>
<dbReference type="InterPro" id="IPR035980">
    <property type="entry name" value="Ribosomal_bS6_sf"/>
</dbReference>
<dbReference type="InterPro" id="IPR020814">
    <property type="entry name" value="Ribosomal_S6_plastid/chlpt"/>
</dbReference>
<dbReference type="InterPro" id="IPR014717">
    <property type="entry name" value="Transl_elong_EF1B/ribsomal_bS6"/>
</dbReference>
<dbReference type="NCBIfam" id="TIGR00166">
    <property type="entry name" value="S6"/>
    <property type="match status" value="1"/>
</dbReference>
<dbReference type="PANTHER" id="PTHR21011">
    <property type="entry name" value="MITOCHONDRIAL 28S RIBOSOMAL PROTEIN S6"/>
    <property type="match status" value="1"/>
</dbReference>
<dbReference type="PANTHER" id="PTHR21011:SF1">
    <property type="entry name" value="SMALL RIBOSOMAL SUBUNIT PROTEIN BS6M"/>
    <property type="match status" value="1"/>
</dbReference>
<dbReference type="Pfam" id="PF01250">
    <property type="entry name" value="Ribosomal_S6"/>
    <property type="match status" value="1"/>
</dbReference>
<dbReference type="SUPFAM" id="SSF54995">
    <property type="entry name" value="Ribosomal protein S6"/>
    <property type="match status" value="1"/>
</dbReference>
<dbReference type="PROSITE" id="PS01048">
    <property type="entry name" value="RIBOSOMAL_S6"/>
    <property type="match status" value="1"/>
</dbReference>
<name>RS6_BACCZ</name>
<gene>
    <name evidence="1" type="primary">rpsF</name>
    <name type="ordered locus">BCE33L5171</name>
</gene>
<sequence>MRKYEIMYIIRPGVEEEAQKALVERFAGVLTNNGAEIINTKEWGKRRLAYEINDLREGFYMILNVNANAEAINEFDRLAKINEDILRHIVVKEEEK</sequence>
<evidence type="ECO:0000255" key="1">
    <source>
        <dbReference type="HAMAP-Rule" id="MF_00360"/>
    </source>
</evidence>
<evidence type="ECO:0000305" key="2"/>
<keyword id="KW-0687">Ribonucleoprotein</keyword>
<keyword id="KW-0689">Ribosomal protein</keyword>
<keyword id="KW-0694">RNA-binding</keyword>
<keyword id="KW-0699">rRNA-binding</keyword>
<protein>
    <recommendedName>
        <fullName evidence="1">Small ribosomal subunit protein bS6</fullName>
    </recommendedName>
    <alternativeName>
        <fullName evidence="2">30S ribosomal protein S6</fullName>
    </alternativeName>
</protein>
<organism>
    <name type="scientific">Bacillus cereus (strain ZK / E33L)</name>
    <dbReference type="NCBI Taxonomy" id="288681"/>
    <lineage>
        <taxon>Bacteria</taxon>
        <taxon>Bacillati</taxon>
        <taxon>Bacillota</taxon>
        <taxon>Bacilli</taxon>
        <taxon>Bacillales</taxon>
        <taxon>Bacillaceae</taxon>
        <taxon>Bacillus</taxon>
        <taxon>Bacillus cereus group</taxon>
    </lineage>
</organism>
<accession>Q630C8</accession>
<proteinExistence type="inferred from homology"/>